<keyword id="KW-0175">Coiled coil</keyword>
<keyword id="KW-1015">Disulfide bond</keyword>
<keyword id="KW-0325">Glycoprotein</keyword>
<keyword id="KW-1185">Reference proteome</keyword>
<keyword id="KW-0964">Secreted</keyword>
<keyword id="KW-0732">Signal</keyword>
<feature type="signal peptide" evidence="1">
    <location>
        <begin position="1"/>
        <end position="28"/>
    </location>
</feature>
<feature type="chain" id="PRO_0000020091" description="Olfactomedin-like protein 1">
    <location>
        <begin position="29"/>
        <end position="402"/>
    </location>
</feature>
<feature type="domain" description="Olfactomedin-like" evidence="3">
    <location>
        <begin position="140"/>
        <end position="397"/>
    </location>
</feature>
<feature type="coiled-coil region" evidence="2">
    <location>
        <begin position="73"/>
        <end position="135"/>
    </location>
</feature>
<feature type="glycosylation site" description="N-linked (GlcNAc...) asparagine" evidence="2">
    <location>
        <position position="66"/>
    </location>
</feature>
<feature type="glycosylation site" description="N-linked (GlcNAc...) asparagine" evidence="2">
    <location>
        <position position="138"/>
    </location>
</feature>
<feature type="glycosylation site" description="N-linked (GlcNAc...) asparagine" evidence="2">
    <location>
        <position position="183"/>
    </location>
</feature>
<feature type="disulfide bond" evidence="3">
    <location>
        <begin position="141"/>
        <end position="324"/>
    </location>
</feature>
<organism>
    <name type="scientific">Rattus norvegicus</name>
    <name type="common">Rat</name>
    <dbReference type="NCBI Taxonomy" id="10116"/>
    <lineage>
        <taxon>Eukaryota</taxon>
        <taxon>Metazoa</taxon>
        <taxon>Chordata</taxon>
        <taxon>Craniata</taxon>
        <taxon>Vertebrata</taxon>
        <taxon>Euteleostomi</taxon>
        <taxon>Mammalia</taxon>
        <taxon>Eutheria</taxon>
        <taxon>Euarchontoglires</taxon>
        <taxon>Glires</taxon>
        <taxon>Rodentia</taxon>
        <taxon>Myomorpha</taxon>
        <taxon>Muroidea</taxon>
        <taxon>Muridae</taxon>
        <taxon>Murinae</taxon>
        <taxon>Rattus</taxon>
    </lineage>
</organism>
<accession>Q66H86</accession>
<sequence length="402" mass="45600">MMVALPGASASLVLFLAAFLPPLQHAQDPAMVHYIYQRFQVLEQGLEKCAQTTRAYIQDFQEFSKNLSTMLGRCQTHTNEYRSAVDNLALRVERAQREIDYLQYLRESDFCVESEEKTSAEKVLQEAEEEKKIRTLLNTSCDNMLMAIKSLKIVKKTVDPEGSWMKDAGSTSAKVYLLAGSRNNTVWEFANLRAFMEDSVKPGPRKLTLPLSWQGSGQVVYQSFLFFHNQGTSNEIIKYNLQKKTVEDRMLLPGGAGRAPIYQHSLSTYIDLAVDEHGLWAIHSGPGIQGHLVLTKIEAGTLGIEHSWDTPCRSQDAEASFLLCGVLYVVYSSGGQGPHRITCVYDPLGTVREEHLPNLFFPRRARSHSMIHYNPRDKQLYAWNEGYQIIYKLQTKKKLPLE</sequence>
<protein>
    <recommendedName>
        <fullName>Olfactomedin-like protein 1</fullName>
    </recommendedName>
</protein>
<name>OLFL1_RAT</name>
<proteinExistence type="evidence at transcript level"/>
<gene>
    <name type="primary">Olfml1</name>
</gene>
<comment type="subcellular location">
    <subcellularLocation>
        <location evidence="1">Secreted</location>
    </subcellularLocation>
</comment>
<comment type="PTM">
    <text evidence="1">Highly N-glycosylated.</text>
</comment>
<reference key="1">
    <citation type="journal article" date="2004" name="Genome Res.">
        <title>The status, quality, and expansion of the NIH full-length cDNA project: the Mammalian Gene Collection (MGC).</title>
        <authorList>
            <consortium name="The MGC Project Team"/>
        </authorList>
    </citation>
    <scope>NUCLEOTIDE SEQUENCE [LARGE SCALE MRNA]</scope>
    <source>
        <tissue>Kidney</tissue>
    </source>
</reference>
<evidence type="ECO:0000250" key="1"/>
<evidence type="ECO:0000255" key="2"/>
<evidence type="ECO:0000255" key="3">
    <source>
        <dbReference type="PROSITE-ProRule" id="PRU00446"/>
    </source>
</evidence>
<dbReference type="EMBL" id="BC081972">
    <property type="protein sequence ID" value="AAH81972.1"/>
    <property type="molecule type" value="mRNA"/>
</dbReference>
<dbReference type="RefSeq" id="NP_001013210.1">
    <property type="nucleotide sequence ID" value="NM_001013192.2"/>
</dbReference>
<dbReference type="SMR" id="Q66H86"/>
<dbReference type="FunCoup" id="Q66H86">
    <property type="interactions" value="25"/>
</dbReference>
<dbReference type="STRING" id="10116.ENSRNOP00000073433"/>
<dbReference type="GlyCosmos" id="Q66H86">
    <property type="glycosylation" value="3 sites, No reported glycans"/>
</dbReference>
<dbReference type="GlyGen" id="Q66H86">
    <property type="glycosylation" value="3 sites"/>
</dbReference>
<dbReference type="PhosphoSitePlus" id="Q66H86"/>
<dbReference type="PaxDb" id="10116-ENSRNOP00000045069"/>
<dbReference type="Ensembl" id="ENSRNOT00000081351.2">
    <property type="protein sequence ID" value="ENSRNOP00000073433.1"/>
    <property type="gene ID" value="ENSRNOG00000056562.2"/>
</dbReference>
<dbReference type="GeneID" id="361621"/>
<dbReference type="KEGG" id="rno:361621"/>
<dbReference type="UCSC" id="RGD:1311854">
    <property type="organism name" value="rat"/>
</dbReference>
<dbReference type="AGR" id="RGD:1311854"/>
<dbReference type="CTD" id="283298"/>
<dbReference type="RGD" id="1311854">
    <property type="gene designation" value="Olfml1"/>
</dbReference>
<dbReference type="eggNOG" id="KOG3545">
    <property type="taxonomic scope" value="Eukaryota"/>
</dbReference>
<dbReference type="GeneTree" id="ENSGT00940000160055"/>
<dbReference type="HOGENOM" id="CLU_035236_2_0_1"/>
<dbReference type="InParanoid" id="Q66H86"/>
<dbReference type="OMA" id="IHYHPGD"/>
<dbReference type="OrthoDB" id="8626508at2759"/>
<dbReference type="PhylomeDB" id="Q66H86"/>
<dbReference type="TreeFam" id="TF352000"/>
<dbReference type="PRO" id="PR:Q66H86"/>
<dbReference type="Proteomes" id="UP000002494">
    <property type="component" value="Chromosome 1"/>
</dbReference>
<dbReference type="Bgee" id="ENSRNOG00000056562">
    <property type="expression patterns" value="Expressed in kidney and 20 other cell types or tissues"/>
</dbReference>
<dbReference type="GO" id="GO:0005615">
    <property type="term" value="C:extracellular space"/>
    <property type="evidence" value="ECO:0000318"/>
    <property type="project" value="GO_Central"/>
</dbReference>
<dbReference type="GO" id="GO:0007165">
    <property type="term" value="P:signal transduction"/>
    <property type="evidence" value="ECO:0000318"/>
    <property type="project" value="GO_Central"/>
</dbReference>
<dbReference type="InterPro" id="IPR003112">
    <property type="entry name" value="Olfac-like_dom"/>
</dbReference>
<dbReference type="InterPro" id="IPR050605">
    <property type="entry name" value="Olfactomedin-like_domain"/>
</dbReference>
<dbReference type="PANTHER" id="PTHR23192:SF13">
    <property type="entry name" value="OLFACTOMEDIN-LIKE PROTEIN 1"/>
    <property type="match status" value="1"/>
</dbReference>
<dbReference type="PANTHER" id="PTHR23192">
    <property type="entry name" value="OLFACTOMEDIN-RELATED"/>
    <property type="match status" value="1"/>
</dbReference>
<dbReference type="Pfam" id="PF02191">
    <property type="entry name" value="OLF"/>
    <property type="match status" value="1"/>
</dbReference>
<dbReference type="SMART" id="SM00284">
    <property type="entry name" value="OLF"/>
    <property type="match status" value="1"/>
</dbReference>
<dbReference type="PROSITE" id="PS51132">
    <property type="entry name" value="OLF"/>
    <property type="match status" value="1"/>
</dbReference>